<name>CAPSD_BYDVP</name>
<proteinExistence type="inferred from homology"/>
<comment type="function">
    <text>Major capsid protein.</text>
</comment>
<comment type="subcellular location">
    <subcellularLocation>
        <location evidence="2">Virion</location>
    </subcellularLocation>
</comment>
<comment type="miscellaneous">
    <text>The N-terminal region like those of many plant virus capsid proteins is highly basic. It has been suggested that these regions may be involved in protein-RNA interaction.</text>
</comment>
<comment type="similarity">
    <text evidence="2">Belongs to the luteoviruses capsid protein family.</text>
</comment>
<reference key="1">
    <citation type="journal article" date="1988" name="Nucleic Acids Res.">
        <title>Sequence and organization of barley yellow dwarf virus genomic RNA.</title>
        <authorList>
            <person name="Miller W.A."/>
            <person name="Waterhouse P.M."/>
            <person name="Gerlach W.L."/>
        </authorList>
    </citation>
    <scope>NUCLEOTIDE SEQUENCE [GENOMIC RNA]</scope>
</reference>
<reference key="2">
    <citation type="journal article" date="1988" name="Virology">
        <title>Sequence and identification of the barley yellow dwarf virus coat protein gene.</title>
        <authorList>
            <person name="Miller W.A."/>
            <person name="Waterhouse P.M."/>
            <person name="Kortt A.A."/>
            <person name="Gerlach W.L."/>
        </authorList>
    </citation>
    <scope>NUCLEOTIDE SEQUENCE [GENOMIC RNA]</scope>
</reference>
<keyword id="KW-0167">Capsid protein</keyword>
<keyword id="KW-1185">Reference proteome</keyword>
<keyword id="KW-1142">T=3 icosahedral capsid protein</keyword>
<keyword id="KW-0946">Virion</keyword>
<dbReference type="EMBL" id="X07653">
    <property type="protein sequence ID" value="CAA30493.1"/>
    <property type="molecule type" value="Genomic_RNA"/>
</dbReference>
<dbReference type="EMBL" id="M21347">
    <property type="protein sequence ID" value="AAA87366.1"/>
    <property type="molecule type" value="Genomic_RNA"/>
</dbReference>
<dbReference type="SMR" id="P09510"/>
<dbReference type="KEGG" id="vg:1491998"/>
<dbReference type="Proteomes" id="UP000006722">
    <property type="component" value="Genome"/>
</dbReference>
<dbReference type="GO" id="GO:0039617">
    <property type="term" value="C:T=3 icosahedral viral capsid"/>
    <property type="evidence" value="ECO:0007669"/>
    <property type="project" value="UniProtKB-KW"/>
</dbReference>
<dbReference type="GO" id="GO:0005198">
    <property type="term" value="F:structural molecule activity"/>
    <property type="evidence" value="ECO:0007669"/>
    <property type="project" value="InterPro"/>
</dbReference>
<dbReference type="Gene3D" id="2.60.120.20">
    <property type="match status" value="1"/>
</dbReference>
<dbReference type="InterPro" id="IPR001517">
    <property type="entry name" value="Luteo_coat"/>
</dbReference>
<dbReference type="InterPro" id="IPR029053">
    <property type="entry name" value="Viral_coat"/>
</dbReference>
<dbReference type="Pfam" id="PF00894">
    <property type="entry name" value="Luteo_coat"/>
    <property type="match status" value="1"/>
</dbReference>
<dbReference type="PRINTS" id="PR00915">
    <property type="entry name" value="LUTEOGP1COAT"/>
</dbReference>
<accession>P09510</accession>
<feature type="chain" id="PRO_0000222408" description="Major capsid protein">
    <location>
        <begin position="1"/>
        <end position="200"/>
    </location>
</feature>
<feature type="region of interest" description="Disordered" evidence="1">
    <location>
        <begin position="1"/>
        <end position="25"/>
    </location>
</feature>
<feature type="region of interest" description="Disordered" evidence="1">
    <location>
        <begin position="33"/>
        <end position="52"/>
    </location>
</feature>
<feature type="compositionally biased region" description="Basic residues" evidence="1">
    <location>
        <begin position="37"/>
        <end position="48"/>
    </location>
</feature>
<organismHost>
    <name type="scientific">Avena byzantina</name>
    <dbReference type="NCBI Taxonomy" id="146531"/>
</organismHost>
<organismHost>
    <name type="scientific">Avena sativa</name>
    <name type="common">Oat</name>
    <dbReference type="NCBI Taxonomy" id="4498"/>
</organismHost>
<organismHost>
    <name type="scientific">Hordeum vulgare</name>
    <name type="common">Barley</name>
    <dbReference type="NCBI Taxonomy" id="4513"/>
</organismHost>
<organismHost>
    <name type="scientific">Lolium multiflorum</name>
    <name type="common">Italian ryegrass</name>
    <name type="synonym">Lolium perenne subsp. multiflorum</name>
    <dbReference type="NCBI Taxonomy" id="4521"/>
</organismHost>
<organismHost>
    <name type="scientific">Lolium perenne</name>
    <name type="common">Perennial ryegrass</name>
    <dbReference type="NCBI Taxonomy" id="4522"/>
</organismHost>
<organismHost>
    <name type="scientific">Oryza sativa</name>
    <name type="common">Rice</name>
    <dbReference type="NCBI Taxonomy" id="4530"/>
</organismHost>
<organismHost>
    <name type="scientific">Secale cereale</name>
    <name type="common">Rye</name>
    <dbReference type="NCBI Taxonomy" id="4550"/>
</organismHost>
<organismHost>
    <name type="scientific">Triticum aestivum</name>
    <name type="common">Wheat</name>
    <dbReference type="NCBI Taxonomy" id="4565"/>
</organismHost>
<organismHost>
    <name type="scientific">Zea mays</name>
    <name type="common">Maize</name>
    <dbReference type="NCBI Taxonomy" id="4577"/>
</organismHost>
<sequence length="200" mass="22047">MNSVGRRGPRRANQNGTRRRRRRTVRPVVVVQPNRAGPRRRNGRRKGRGGANFVFRPTGGTEVFVFSVDNLKANSSGAIKFGPSLSQCPALSDGILKSYHRYKITSIRVEFKSHASANTAGAIFIELDTACKQSALGSYINSFTISKTASKTFRSEAINGKEFQESTIDQFWMLYKANGTTTDTAGQFIITMSVSLMTAK</sequence>
<evidence type="ECO:0000256" key="1">
    <source>
        <dbReference type="SAM" id="MobiDB-lite"/>
    </source>
</evidence>
<evidence type="ECO:0000305" key="2"/>
<gene>
    <name type="ORF">ORF3</name>
</gene>
<organism>
    <name type="scientific">Barley yellow dwarf virus (isolate PAV)</name>
    <name type="common">BYDV</name>
    <dbReference type="NCBI Taxonomy" id="2169986"/>
    <lineage>
        <taxon>Viruses</taxon>
        <taxon>Riboviria</taxon>
        <taxon>Orthornavirae</taxon>
        <taxon>Kitrinoviricota</taxon>
        <taxon>Tolucaviricetes</taxon>
        <taxon>Tolivirales</taxon>
        <taxon>Tombusviridae</taxon>
        <taxon>Regressovirinae</taxon>
        <taxon>Luteovirus</taxon>
        <taxon>Luteovirus pavhordei</taxon>
    </lineage>
</organism>
<protein>
    <recommendedName>
        <fullName>Major capsid protein</fullName>
    </recommendedName>
    <alternativeName>
        <fullName>Coat protein</fullName>
        <shortName>CP</shortName>
    </alternativeName>
</protein>